<accession>Q1IXS9</accession>
<sequence>MATPLSPAFFDRDPVKVAREVLGSTLVRVLPGGEVLSGRVVEVEAYDCPRDPACTAGRFHAARTAEMAISPGHWLFWTAHGHPLLQVSCREKGIPASILIRALEPLTGLGSMLTHRPVSRERELTNGPAKLVSALGLKPAEVVGTRVDSPALHLLPPPALLPADAVTVTARIGIKEGRNLPWRFLLRGNPWVSPGVPSMDLAGPLTAKS</sequence>
<gene>
    <name type="ordered locus">Dgeo_1660</name>
</gene>
<evidence type="ECO:0000255" key="1">
    <source>
        <dbReference type="HAMAP-Rule" id="MF_00527"/>
    </source>
</evidence>
<organism>
    <name type="scientific">Deinococcus geothermalis (strain DSM 11300 / CIP 105573 / AG-3a)</name>
    <dbReference type="NCBI Taxonomy" id="319795"/>
    <lineage>
        <taxon>Bacteria</taxon>
        <taxon>Thermotogati</taxon>
        <taxon>Deinococcota</taxon>
        <taxon>Deinococci</taxon>
        <taxon>Deinococcales</taxon>
        <taxon>Deinococcaceae</taxon>
        <taxon>Deinococcus</taxon>
    </lineage>
</organism>
<feature type="chain" id="PRO_0000265014" description="Putative 3-methyladenine DNA glycosylase">
    <location>
        <begin position="1"/>
        <end position="209"/>
    </location>
</feature>
<dbReference type="EC" id="3.2.2.-" evidence="1"/>
<dbReference type="EMBL" id="CP000359">
    <property type="protein sequence ID" value="ABF45955.1"/>
    <property type="molecule type" value="Genomic_DNA"/>
</dbReference>
<dbReference type="RefSeq" id="WP_011530789.1">
    <property type="nucleotide sequence ID" value="NC_008025.1"/>
</dbReference>
<dbReference type="SMR" id="Q1IXS9"/>
<dbReference type="STRING" id="319795.Dgeo_1660"/>
<dbReference type="KEGG" id="dge:Dgeo_1660"/>
<dbReference type="eggNOG" id="COG2094">
    <property type="taxonomic scope" value="Bacteria"/>
</dbReference>
<dbReference type="HOGENOM" id="CLU_060471_3_0_0"/>
<dbReference type="Proteomes" id="UP000002431">
    <property type="component" value="Chromosome"/>
</dbReference>
<dbReference type="GO" id="GO:0003905">
    <property type="term" value="F:alkylbase DNA N-glycosylase activity"/>
    <property type="evidence" value="ECO:0007669"/>
    <property type="project" value="InterPro"/>
</dbReference>
<dbReference type="GO" id="GO:0003677">
    <property type="term" value="F:DNA binding"/>
    <property type="evidence" value="ECO:0007669"/>
    <property type="project" value="InterPro"/>
</dbReference>
<dbReference type="GO" id="GO:0006284">
    <property type="term" value="P:base-excision repair"/>
    <property type="evidence" value="ECO:0007669"/>
    <property type="project" value="InterPro"/>
</dbReference>
<dbReference type="CDD" id="cd00540">
    <property type="entry name" value="AAG"/>
    <property type="match status" value="1"/>
</dbReference>
<dbReference type="Gene3D" id="3.10.300.10">
    <property type="entry name" value="Methylpurine-DNA glycosylase (MPG)"/>
    <property type="match status" value="1"/>
</dbReference>
<dbReference type="HAMAP" id="MF_00527">
    <property type="entry name" value="3MGH"/>
    <property type="match status" value="1"/>
</dbReference>
<dbReference type="InterPro" id="IPR011034">
    <property type="entry name" value="Formyl_transferase-like_C_sf"/>
</dbReference>
<dbReference type="InterPro" id="IPR003180">
    <property type="entry name" value="MPG"/>
</dbReference>
<dbReference type="InterPro" id="IPR036995">
    <property type="entry name" value="MPG_sf"/>
</dbReference>
<dbReference type="NCBIfam" id="TIGR00567">
    <property type="entry name" value="3mg"/>
    <property type="match status" value="1"/>
</dbReference>
<dbReference type="PANTHER" id="PTHR10429">
    <property type="entry name" value="DNA-3-METHYLADENINE GLYCOSYLASE"/>
    <property type="match status" value="1"/>
</dbReference>
<dbReference type="PANTHER" id="PTHR10429:SF0">
    <property type="entry name" value="DNA-3-METHYLADENINE GLYCOSYLASE"/>
    <property type="match status" value="1"/>
</dbReference>
<dbReference type="Pfam" id="PF02245">
    <property type="entry name" value="Pur_DNA_glyco"/>
    <property type="match status" value="1"/>
</dbReference>
<dbReference type="SUPFAM" id="SSF50486">
    <property type="entry name" value="FMT C-terminal domain-like"/>
    <property type="match status" value="1"/>
</dbReference>
<reference key="1">
    <citation type="submission" date="2006-04" db="EMBL/GenBank/DDBJ databases">
        <title>Complete sequence of chromosome of Deinococcus geothermalis DSM 11300.</title>
        <authorList>
            <person name="Copeland A."/>
            <person name="Lucas S."/>
            <person name="Lapidus A."/>
            <person name="Barry K."/>
            <person name="Detter J.C."/>
            <person name="Glavina del Rio T."/>
            <person name="Hammon N."/>
            <person name="Israni S."/>
            <person name="Dalin E."/>
            <person name="Tice H."/>
            <person name="Pitluck S."/>
            <person name="Brettin T."/>
            <person name="Bruce D."/>
            <person name="Han C."/>
            <person name="Tapia R."/>
            <person name="Saunders E."/>
            <person name="Gilna P."/>
            <person name="Schmutz J."/>
            <person name="Larimer F."/>
            <person name="Land M."/>
            <person name="Hauser L."/>
            <person name="Kyrpides N."/>
            <person name="Kim E."/>
            <person name="Daly M.J."/>
            <person name="Fredrickson J.K."/>
            <person name="Makarova K.S."/>
            <person name="Gaidamakova E.K."/>
            <person name="Zhai M."/>
            <person name="Richardson P."/>
        </authorList>
    </citation>
    <scope>NUCLEOTIDE SEQUENCE [LARGE SCALE GENOMIC DNA]</scope>
    <source>
        <strain>DSM 11300 / CIP 105573 / AG-3a</strain>
    </source>
</reference>
<proteinExistence type="inferred from homology"/>
<name>3MGH_DEIGD</name>
<comment type="similarity">
    <text evidence="1">Belongs to the DNA glycosylase MPG family.</text>
</comment>
<protein>
    <recommendedName>
        <fullName evidence="1">Putative 3-methyladenine DNA glycosylase</fullName>
        <ecNumber evidence="1">3.2.2.-</ecNumber>
    </recommendedName>
</protein>
<keyword id="KW-0227">DNA damage</keyword>
<keyword id="KW-0234">DNA repair</keyword>
<keyword id="KW-0378">Hydrolase</keyword>